<comment type="function">
    <text evidence="1">Catalyzes the acyloin condensation reaction between C atoms 2 and 3 of pyruvate and glyceraldehyde 3-phosphate to yield 1-deoxy-D-xylulose-5-phosphate (DXP).</text>
</comment>
<comment type="catalytic activity">
    <reaction evidence="1">
        <text>D-glyceraldehyde 3-phosphate + pyruvate + H(+) = 1-deoxy-D-xylulose 5-phosphate + CO2</text>
        <dbReference type="Rhea" id="RHEA:12605"/>
        <dbReference type="ChEBI" id="CHEBI:15361"/>
        <dbReference type="ChEBI" id="CHEBI:15378"/>
        <dbReference type="ChEBI" id="CHEBI:16526"/>
        <dbReference type="ChEBI" id="CHEBI:57792"/>
        <dbReference type="ChEBI" id="CHEBI:59776"/>
        <dbReference type="EC" id="2.2.1.7"/>
    </reaction>
</comment>
<comment type="cofactor">
    <cofactor evidence="1">
        <name>Mg(2+)</name>
        <dbReference type="ChEBI" id="CHEBI:18420"/>
    </cofactor>
    <text evidence="1">Binds 1 Mg(2+) ion per subunit.</text>
</comment>
<comment type="cofactor">
    <cofactor evidence="1">
        <name>thiamine diphosphate</name>
        <dbReference type="ChEBI" id="CHEBI:58937"/>
    </cofactor>
    <text evidence="1">Binds 1 thiamine pyrophosphate per subunit.</text>
</comment>
<comment type="pathway">
    <text evidence="1">Metabolic intermediate biosynthesis; 1-deoxy-D-xylulose 5-phosphate biosynthesis; 1-deoxy-D-xylulose 5-phosphate from D-glyceraldehyde 3-phosphate and pyruvate: step 1/1.</text>
</comment>
<comment type="subunit">
    <text evidence="1">Homodimer.</text>
</comment>
<comment type="similarity">
    <text evidence="1">Belongs to the transketolase family. DXPS subfamily.</text>
</comment>
<proteinExistence type="inferred from homology"/>
<gene>
    <name evidence="1" type="primary">dxs</name>
    <name type="ordered locus">HAPS_0107</name>
</gene>
<dbReference type="EC" id="2.2.1.7" evidence="1"/>
<dbReference type="EMBL" id="CP001321">
    <property type="protein sequence ID" value="ACL31806.1"/>
    <property type="molecule type" value="Genomic_DNA"/>
</dbReference>
<dbReference type="RefSeq" id="WP_012621555.1">
    <property type="nucleotide sequence ID" value="NC_011852.1"/>
</dbReference>
<dbReference type="SMR" id="B8F3A4"/>
<dbReference type="STRING" id="557723.HAPS_0107"/>
<dbReference type="KEGG" id="hap:HAPS_0107"/>
<dbReference type="PATRIC" id="fig|557723.8.peg.112"/>
<dbReference type="HOGENOM" id="CLU_009227_1_4_6"/>
<dbReference type="UniPathway" id="UPA00064">
    <property type="reaction ID" value="UER00091"/>
</dbReference>
<dbReference type="Proteomes" id="UP000006743">
    <property type="component" value="Chromosome"/>
</dbReference>
<dbReference type="GO" id="GO:0005829">
    <property type="term" value="C:cytosol"/>
    <property type="evidence" value="ECO:0007669"/>
    <property type="project" value="TreeGrafter"/>
</dbReference>
<dbReference type="GO" id="GO:0008661">
    <property type="term" value="F:1-deoxy-D-xylulose-5-phosphate synthase activity"/>
    <property type="evidence" value="ECO:0007669"/>
    <property type="project" value="UniProtKB-UniRule"/>
</dbReference>
<dbReference type="GO" id="GO:0000287">
    <property type="term" value="F:magnesium ion binding"/>
    <property type="evidence" value="ECO:0007669"/>
    <property type="project" value="UniProtKB-UniRule"/>
</dbReference>
<dbReference type="GO" id="GO:0030976">
    <property type="term" value="F:thiamine pyrophosphate binding"/>
    <property type="evidence" value="ECO:0007669"/>
    <property type="project" value="UniProtKB-UniRule"/>
</dbReference>
<dbReference type="GO" id="GO:0052865">
    <property type="term" value="P:1-deoxy-D-xylulose 5-phosphate biosynthetic process"/>
    <property type="evidence" value="ECO:0007669"/>
    <property type="project" value="UniProtKB-UniPathway"/>
</dbReference>
<dbReference type="GO" id="GO:0019288">
    <property type="term" value="P:isopentenyl diphosphate biosynthetic process, methylerythritol 4-phosphate pathway"/>
    <property type="evidence" value="ECO:0007669"/>
    <property type="project" value="TreeGrafter"/>
</dbReference>
<dbReference type="GO" id="GO:0016114">
    <property type="term" value="P:terpenoid biosynthetic process"/>
    <property type="evidence" value="ECO:0007669"/>
    <property type="project" value="UniProtKB-UniRule"/>
</dbReference>
<dbReference type="GO" id="GO:0009228">
    <property type="term" value="P:thiamine biosynthetic process"/>
    <property type="evidence" value="ECO:0007669"/>
    <property type="project" value="UniProtKB-UniRule"/>
</dbReference>
<dbReference type="CDD" id="cd02007">
    <property type="entry name" value="TPP_DXS"/>
    <property type="match status" value="1"/>
</dbReference>
<dbReference type="CDD" id="cd07033">
    <property type="entry name" value="TPP_PYR_DXS_TK_like"/>
    <property type="match status" value="1"/>
</dbReference>
<dbReference type="FunFam" id="3.40.50.920:FF:000002">
    <property type="entry name" value="1-deoxy-D-xylulose-5-phosphate synthase"/>
    <property type="match status" value="1"/>
</dbReference>
<dbReference type="FunFam" id="3.40.50.970:FF:000005">
    <property type="entry name" value="1-deoxy-D-xylulose-5-phosphate synthase"/>
    <property type="match status" value="1"/>
</dbReference>
<dbReference type="Gene3D" id="3.40.50.920">
    <property type="match status" value="1"/>
</dbReference>
<dbReference type="Gene3D" id="3.40.50.970">
    <property type="match status" value="2"/>
</dbReference>
<dbReference type="HAMAP" id="MF_00315">
    <property type="entry name" value="DXP_synth"/>
    <property type="match status" value="1"/>
</dbReference>
<dbReference type="InterPro" id="IPR005477">
    <property type="entry name" value="Dxylulose-5-P_synthase"/>
</dbReference>
<dbReference type="InterPro" id="IPR029061">
    <property type="entry name" value="THDP-binding"/>
</dbReference>
<dbReference type="InterPro" id="IPR009014">
    <property type="entry name" value="Transketo_C/PFOR_II"/>
</dbReference>
<dbReference type="InterPro" id="IPR005475">
    <property type="entry name" value="Transketolase-like_Pyr-bd"/>
</dbReference>
<dbReference type="InterPro" id="IPR020826">
    <property type="entry name" value="Transketolase_BS"/>
</dbReference>
<dbReference type="InterPro" id="IPR033248">
    <property type="entry name" value="Transketolase_C"/>
</dbReference>
<dbReference type="InterPro" id="IPR049557">
    <property type="entry name" value="Transketolase_CS"/>
</dbReference>
<dbReference type="NCBIfam" id="TIGR00204">
    <property type="entry name" value="dxs"/>
    <property type="match status" value="1"/>
</dbReference>
<dbReference type="NCBIfam" id="NF003933">
    <property type="entry name" value="PRK05444.2-2"/>
    <property type="match status" value="1"/>
</dbReference>
<dbReference type="PANTHER" id="PTHR43322">
    <property type="entry name" value="1-D-DEOXYXYLULOSE 5-PHOSPHATE SYNTHASE-RELATED"/>
    <property type="match status" value="1"/>
</dbReference>
<dbReference type="PANTHER" id="PTHR43322:SF5">
    <property type="entry name" value="1-DEOXY-D-XYLULOSE-5-PHOSPHATE SYNTHASE, CHLOROPLASTIC"/>
    <property type="match status" value="1"/>
</dbReference>
<dbReference type="Pfam" id="PF13292">
    <property type="entry name" value="DXP_synthase_N"/>
    <property type="match status" value="1"/>
</dbReference>
<dbReference type="Pfam" id="PF02779">
    <property type="entry name" value="Transket_pyr"/>
    <property type="match status" value="1"/>
</dbReference>
<dbReference type="Pfam" id="PF02780">
    <property type="entry name" value="Transketolase_C"/>
    <property type="match status" value="1"/>
</dbReference>
<dbReference type="SMART" id="SM00861">
    <property type="entry name" value="Transket_pyr"/>
    <property type="match status" value="1"/>
</dbReference>
<dbReference type="SUPFAM" id="SSF52518">
    <property type="entry name" value="Thiamin diphosphate-binding fold (THDP-binding)"/>
    <property type="match status" value="2"/>
</dbReference>
<dbReference type="SUPFAM" id="SSF52922">
    <property type="entry name" value="TK C-terminal domain-like"/>
    <property type="match status" value="1"/>
</dbReference>
<dbReference type="PROSITE" id="PS00801">
    <property type="entry name" value="TRANSKETOLASE_1"/>
    <property type="match status" value="1"/>
</dbReference>
<dbReference type="PROSITE" id="PS00802">
    <property type="entry name" value="TRANSKETOLASE_2"/>
    <property type="match status" value="1"/>
</dbReference>
<keyword id="KW-0414">Isoprene biosynthesis</keyword>
<keyword id="KW-0460">Magnesium</keyword>
<keyword id="KW-0479">Metal-binding</keyword>
<keyword id="KW-1185">Reference proteome</keyword>
<keyword id="KW-0784">Thiamine biosynthesis</keyword>
<keyword id="KW-0786">Thiamine pyrophosphate</keyword>
<keyword id="KW-0808">Transferase</keyword>
<sequence>MQKTYPLLSQINSPDDLRLLPKDKLQPLCDELRAYLLESVSQTSGHLASGLGVVELTVALHYVYQTPFDQLIWDVGHQAYPHKILTGRRDQMHTIRQKDGLHPFPWREESPFDVLSVGHSSTSISAGLGIAVAAEKENAGRKTVCVIGDGAITAGMAFEAINHAGSIHTDMLVILNDNEMSISENVGALNNHLARLFTGSLYGTLREGGKKLLSGIPSIKEFVRKTEEHVKGFVSPVGTMFETLGFNYIGPIDGHDIEELISTLKNMRNMSGPQFLHIKTKKGKGYTPAEQDPIGFHGVPKFDHTSGKLPQTKSVPTYSNIFGDWLCEMAERDPKIIGITPAMREGSGMVEFSKRFPQQYFDVAIAEQHAVTFGAGLAIAGYKPVVAIYSSFLQRAYDQLIHDVAIQNLPVIFAIDRAGIVGADGQTHQGAFDLSFMRCVPNMTIMCPSDENEMRQMLYTAYTMNSPVAVRYPRGNAQGVELQPMQALEIGKGKVLKQGEKVAILNFGALLNEAKQVAETHNYTLVDMRFAKPLDEALIAELADRHELLVTLEENALQGGAGSAVNEYLQHIGKIKPLLMLGIPDFFIPQATQAESYADLGLDAKGIEQKILSMK</sequence>
<protein>
    <recommendedName>
        <fullName evidence="1">1-deoxy-D-xylulose-5-phosphate synthase</fullName>
        <ecNumber evidence="1">2.2.1.7</ecNumber>
    </recommendedName>
    <alternativeName>
        <fullName evidence="1">1-deoxyxylulose-5-phosphate synthase</fullName>
        <shortName evidence="1">DXP synthase</shortName>
        <shortName evidence="1">DXPS</shortName>
    </alternativeName>
</protein>
<feature type="chain" id="PRO_1000132935" description="1-deoxy-D-xylulose-5-phosphate synthase">
    <location>
        <begin position="1"/>
        <end position="615"/>
    </location>
</feature>
<feature type="binding site" evidence="1">
    <location>
        <position position="77"/>
    </location>
    <ligand>
        <name>thiamine diphosphate</name>
        <dbReference type="ChEBI" id="CHEBI:58937"/>
    </ligand>
</feature>
<feature type="binding site" evidence="1">
    <location>
        <begin position="118"/>
        <end position="120"/>
    </location>
    <ligand>
        <name>thiamine diphosphate</name>
        <dbReference type="ChEBI" id="CHEBI:58937"/>
    </ligand>
</feature>
<feature type="binding site" evidence="1">
    <location>
        <position position="149"/>
    </location>
    <ligand>
        <name>Mg(2+)</name>
        <dbReference type="ChEBI" id="CHEBI:18420"/>
    </ligand>
</feature>
<feature type="binding site" evidence="1">
    <location>
        <begin position="150"/>
        <end position="151"/>
    </location>
    <ligand>
        <name>thiamine diphosphate</name>
        <dbReference type="ChEBI" id="CHEBI:58937"/>
    </ligand>
</feature>
<feature type="binding site" evidence="1">
    <location>
        <position position="178"/>
    </location>
    <ligand>
        <name>Mg(2+)</name>
        <dbReference type="ChEBI" id="CHEBI:18420"/>
    </ligand>
</feature>
<feature type="binding site" evidence="1">
    <location>
        <position position="178"/>
    </location>
    <ligand>
        <name>thiamine diphosphate</name>
        <dbReference type="ChEBI" id="CHEBI:58937"/>
    </ligand>
</feature>
<feature type="binding site" evidence="1">
    <location>
        <position position="286"/>
    </location>
    <ligand>
        <name>thiamine diphosphate</name>
        <dbReference type="ChEBI" id="CHEBI:58937"/>
    </ligand>
</feature>
<feature type="binding site" evidence="1">
    <location>
        <position position="367"/>
    </location>
    <ligand>
        <name>thiamine diphosphate</name>
        <dbReference type="ChEBI" id="CHEBI:58937"/>
    </ligand>
</feature>
<name>DXS_GLAP5</name>
<organism>
    <name type="scientific">Glaesserella parasuis serovar 5 (strain SH0165)</name>
    <name type="common">Haemophilus parasuis</name>
    <dbReference type="NCBI Taxonomy" id="557723"/>
    <lineage>
        <taxon>Bacteria</taxon>
        <taxon>Pseudomonadati</taxon>
        <taxon>Pseudomonadota</taxon>
        <taxon>Gammaproteobacteria</taxon>
        <taxon>Pasteurellales</taxon>
        <taxon>Pasteurellaceae</taxon>
        <taxon>Glaesserella</taxon>
    </lineage>
</organism>
<reference key="1">
    <citation type="journal article" date="2009" name="J. Bacteriol.">
        <title>Complete genome sequence of Haemophilus parasuis SH0165.</title>
        <authorList>
            <person name="Yue M."/>
            <person name="Yang F."/>
            <person name="Yang J."/>
            <person name="Bei W."/>
            <person name="Cai X."/>
            <person name="Chen L."/>
            <person name="Dong J."/>
            <person name="Zhou R."/>
            <person name="Jin M."/>
            <person name="Jin Q."/>
            <person name="Chen H."/>
        </authorList>
    </citation>
    <scope>NUCLEOTIDE SEQUENCE [LARGE SCALE GENOMIC DNA]</scope>
    <source>
        <strain>SH0165</strain>
    </source>
</reference>
<evidence type="ECO:0000255" key="1">
    <source>
        <dbReference type="HAMAP-Rule" id="MF_00315"/>
    </source>
</evidence>
<accession>B8F3A4</accession>